<organism>
    <name type="scientific">Edwardsiella ictaluri (strain 93-146)</name>
    <dbReference type="NCBI Taxonomy" id="634503"/>
    <lineage>
        <taxon>Bacteria</taxon>
        <taxon>Pseudomonadati</taxon>
        <taxon>Pseudomonadota</taxon>
        <taxon>Gammaproteobacteria</taxon>
        <taxon>Enterobacterales</taxon>
        <taxon>Hafniaceae</taxon>
        <taxon>Edwardsiella</taxon>
    </lineage>
</organism>
<reference key="1">
    <citation type="submission" date="2009-03" db="EMBL/GenBank/DDBJ databases">
        <title>Complete genome sequence of Edwardsiella ictaluri 93-146.</title>
        <authorList>
            <person name="Williams M.L."/>
            <person name="Gillaspy A.F."/>
            <person name="Dyer D.W."/>
            <person name="Thune R.L."/>
            <person name="Waldbieser G.C."/>
            <person name="Schuster S.C."/>
            <person name="Gipson J."/>
            <person name="Zaitshik J."/>
            <person name="Landry C."/>
            <person name="Lawrence M.L."/>
        </authorList>
    </citation>
    <scope>NUCLEOTIDE SEQUENCE [LARGE SCALE GENOMIC DNA]</scope>
    <source>
        <strain>93-146</strain>
    </source>
</reference>
<dbReference type="EMBL" id="CP001600">
    <property type="protein sequence ID" value="ACR67894.1"/>
    <property type="molecule type" value="Genomic_DNA"/>
</dbReference>
<dbReference type="RefSeq" id="WP_015870088.1">
    <property type="nucleotide sequence ID" value="NZ_CP169062.1"/>
</dbReference>
<dbReference type="SMR" id="C5B7L7"/>
<dbReference type="STRING" id="67780.B6E78_14020"/>
<dbReference type="GeneID" id="69537739"/>
<dbReference type="KEGG" id="eic:NT01EI_0672"/>
<dbReference type="PATRIC" id="fig|634503.3.peg.605"/>
<dbReference type="HOGENOM" id="CLU_005965_2_4_6"/>
<dbReference type="OrthoDB" id="9766019at2"/>
<dbReference type="Proteomes" id="UP000001485">
    <property type="component" value="Chromosome"/>
</dbReference>
<dbReference type="GO" id="GO:0005524">
    <property type="term" value="F:ATP binding"/>
    <property type="evidence" value="ECO:0007669"/>
    <property type="project" value="UniProtKB-UniRule"/>
</dbReference>
<dbReference type="GO" id="GO:0140662">
    <property type="term" value="F:ATP-dependent protein folding chaperone"/>
    <property type="evidence" value="ECO:0007669"/>
    <property type="project" value="InterPro"/>
</dbReference>
<dbReference type="GO" id="GO:0051082">
    <property type="term" value="F:unfolded protein binding"/>
    <property type="evidence" value="ECO:0007669"/>
    <property type="project" value="InterPro"/>
</dbReference>
<dbReference type="CDD" id="cd10234">
    <property type="entry name" value="ASKHA_NBD_HSP70_DnaK-like"/>
    <property type="match status" value="1"/>
</dbReference>
<dbReference type="FunFam" id="2.60.34.10:FF:000014">
    <property type="entry name" value="Chaperone protein DnaK HSP70"/>
    <property type="match status" value="1"/>
</dbReference>
<dbReference type="FunFam" id="1.20.1270.10:FF:000001">
    <property type="entry name" value="Molecular chaperone DnaK"/>
    <property type="match status" value="1"/>
</dbReference>
<dbReference type="FunFam" id="3.30.420.40:FF:000004">
    <property type="entry name" value="Molecular chaperone DnaK"/>
    <property type="match status" value="1"/>
</dbReference>
<dbReference type="FunFam" id="3.90.640.10:FF:000003">
    <property type="entry name" value="Molecular chaperone DnaK"/>
    <property type="match status" value="1"/>
</dbReference>
<dbReference type="Gene3D" id="1.20.1270.10">
    <property type="match status" value="1"/>
</dbReference>
<dbReference type="Gene3D" id="3.30.420.40">
    <property type="match status" value="2"/>
</dbReference>
<dbReference type="Gene3D" id="3.90.640.10">
    <property type="entry name" value="Actin, Chain A, domain 4"/>
    <property type="match status" value="1"/>
</dbReference>
<dbReference type="Gene3D" id="2.60.34.10">
    <property type="entry name" value="Substrate Binding Domain Of DNAk, Chain A, domain 1"/>
    <property type="match status" value="1"/>
</dbReference>
<dbReference type="HAMAP" id="MF_00332">
    <property type="entry name" value="DnaK"/>
    <property type="match status" value="1"/>
</dbReference>
<dbReference type="InterPro" id="IPR043129">
    <property type="entry name" value="ATPase_NBD"/>
</dbReference>
<dbReference type="InterPro" id="IPR012725">
    <property type="entry name" value="Chaperone_DnaK"/>
</dbReference>
<dbReference type="InterPro" id="IPR018181">
    <property type="entry name" value="Heat_shock_70_CS"/>
</dbReference>
<dbReference type="InterPro" id="IPR029048">
    <property type="entry name" value="HSP70_C_sf"/>
</dbReference>
<dbReference type="InterPro" id="IPR029047">
    <property type="entry name" value="HSP70_peptide-bd_sf"/>
</dbReference>
<dbReference type="InterPro" id="IPR013126">
    <property type="entry name" value="Hsp_70_fam"/>
</dbReference>
<dbReference type="NCBIfam" id="NF001413">
    <property type="entry name" value="PRK00290.1"/>
    <property type="match status" value="1"/>
</dbReference>
<dbReference type="NCBIfam" id="NF003520">
    <property type="entry name" value="PRK05183.1"/>
    <property type="match status" value="1"/>
</dbReference>
<dbReference type="NCBIfam" id="TIGR02350">
    <property type="entry name" value="prok_dnaK"/>
    <property type="match status" value="1"/>
</dbReference>
<dbReference type="PANTHER" id="PTHR19375">
    <property type="entry name" value="HEAT SHOCK PROTEIN 70KDA"/>
    <property type="match status" value="1"/>
</dbReference>
<dbReference type="Pfam" id="PF00012">
    <property type="entry name" value="HSP70"/>
    <property type="match status" value="1"/>
</dbReference>
<dbReference type="PRINTS" id="PR00301">
    <property type="entry name" value="HEATSHOCK70"/>
</dbReference>
<dbReference type="SUPFAM" id="SSF53067">
    <property type="entry name" value="Actin-like ATPase domain"/>
    <property type="match status" value="2"/>
</dbReference>
<dbReference type="SUPFAM" id="SSF100920">
    <property type="entry name" value="Heat shock protein 70kD (HSP70), peptide-binding domain"/>
    <property type="match status" value="1"/>
</dbReference>
<dbReference type="PROSITE" id="PS00297">
    <property type="entry name" value="HSP70_1"/>
    <property type="match status" value="1"/>
</dbReference>
<dbReference type="PROSITE" id="PS00329">
    <property type="entry name" value="HSP70_2"/>
    <property type="match status" value="1"/>
</dbReference>
<dbReference type="PROSITE" id="PS01036">
    <property type="entry name" value="HSP70_3"/>
    <property type="match status" value="1"/>
</dbReference>
<sequence>MGKIIGIDLGTTNSCVAVMDGGKARVLENAEGDRTTPSIIAYTQDGEVLVGQPAKRQAVTNPQNTLFAIKRLIGRRFEDAEAQRDKDIMPYKIVAADNGDAWVEVKDQKIAPPQISAEVLKKMKKTAEDFLGETVTEAVITVPAYFNDAQRQATKDAGRIAGLDVKRIINEPTAAALAYGMDKGVGNRTIAVYDLGGGTFDISIIEIDDVDGEKTFEVLATNGDTHLGGEDFDSRLINYLVDEFKKEQGIDLRNDPLAMQRLKEAAEKAKIELSSAQQTDVNLPYITADATGPKHMNIKVTRAKLESLVEELVARSMEPLKVALKDAGLSVSDIDDVILVGGQTRMPMVQKQVADFFGKEPRKDVNPDEAVAIGAAVQGGVLAGDVKDVLLLDVTPLSLGIETMGGVMTALISKNTTIPTKHSQVFSTAEDNQSAVTIHVLQGERKRAADNKSLGQFNLDGIQPAPRGMPQIEVTFDIDADGILHVSAKDKNSGREQNITIKASSGLSEDEIKQMVRDAEANAEADRKFEELVQVRNQADQLVHGTRKLVEEAGDKLPATDKSAIEEAVKALEAASKGEDKADIEAKIQALVQSSAKLQELAQQQAQAGEAQADTSAKKDDDVVDAEFEEVKDKK</sequence>
<name>DNAK_EDWI9</name>
<evidence type="ECO:0000255" key="1">
    <source>
        <dbReference type="HAMAP-Rule" id="MF_00332"/>
    </source>
</evidence>
<evidence type="ECO:0000256" key="2">
    <source>
        <dbReference type="SAM" id="MobiDB-lite"/>
    </source>
</evidence>
<keyword id="KW-0067">ATP-binding</keyword>
<keyword id="KW-0143">Chaperone</keyword>
<keyword id="KW-0547">Nucleotide-binding</keyword>
<keyword id="KW-0597">Phosphoprotein</keyword>
<keyword id="KW-0346">Stress response</keyword>
<proteinExistence type="inferred from homology"/>
<gene>
    <name evidence="1" type="primary">dnaK</name>
    <name type="ordered locus">NT01EI_0672</name>
</gene>
<accession>C5B7L7</accession>
<protein>
    <recommendedName>
        <fullName evidence="1">Chaperone protein DnaK</fullName>
    </recommendedName>
    <alternativeName>
        <fullName evidence="1">HSP70</fullName>
    </alternativeName>
    <alternativeName>
        <fullName evidence="1">Heat shock 70 kDa protein</fullName>
    </alternativeName>
    <alternativeName>
        <fullName evidence="1">Heat shock protein 70</fullName>
    </alternativeName>
</protein>
<feature type="chain" id="PRO_1000205186" description="Chaperone protein DnaK">
    <location>
        <begin position="1"/>
        <end position="635"/>
    </location>
</feature>
<feature type="region of interest" description="Disordered" evidence="2">
    <location>
        <begin position="603"/>
        <end position="635"/>
    </location>
</feature>
<feature type="compositionally biased region" description="Low complexity" evidence="2">
    <location>
        <begin position="603"/>
        <end position="613"/>
    </location>
</feature>
<feature type="modified residue" description="Phosphothreonine; by autocatalysis" evidence="1">
    <location>
        <position position="199"/>
    </location>
</feature>
<comment type="function">
    <text evidence="1">Acts as a chaperone.</text>
</comment>
<comment type="induction">
    <text evidence="1">By stress conditions e.g. heat shock.</text>
</comment>
<comment type="similarity">
    <text evidence="1">Belongs to the heat shock protein 70 family.</text>
</comment>